<accession>P72870</accession>
<evidence type="ECO:0000250" key="1"/>
<evidence type="ECO:0000269" key="2">
    <source ref="2"/>
</evidence>
<evidence type="ECO:0000305" key="3"/>
<evidence type="ECO:0007829" key="4">
    <source>
        <dbReference type="PDB" id="4PO5"/>
    </source>
</evidence>
<protein>
    <recommendedName>
        <fullName>Allophycocyanin subunit alpha-B</fullName>
    </recommendedName>
</protein>
<feature type="chain" id="PRO_0000403177" description="Allophycocyanin subunit alpha-B">
    <location>
        <begin position="1"/>
        <end position="161"/>
    </location>
</feature>
<feature type="binding site" description="covalent" evidence="1">
    <location>
        <position position="81"/>
    </location>
    <ligand>
        <name>(2R,3E)-phycocyanobilin</name>
        <dbReference type="ChEBI" id="CHEBI:85275"/>
    </ligand>
</feature>
<feature type="modified residue" description="N4-methylasparagine" evidence="1">
    <location>
        <position position="71"/>
    </location>
</feature>
<feature type="helix" evidence="4">
    <location>
        <begin position="3"/>
        <end position="13"/>
    </location>
</feature>
<feature type="helix" evidence="4">
    <location>
        <begin position="20"/>
        <end position="30"/>
    </location>
</feature>
<feature type="helix" evidence="4">
    <location>
        <begin position="33"/>
        <end position="45"/>
    </location>
</feature>
<feature type="helix" evidence="4">
    <location>
        <begin position="47"/>
        <end position="61"/>
    </location>
</feature>
<feature type="helix" evidence="4">
    <location>
        <begin position="63"/>
        <end position="66"/>
    </location>
</feature>
<feature type="helix" evidence="4">
    <location>
        <begin position="75"/>
        <end position="98"/>
    </location>
</feature>
<feature type="helix" evidence="4">
    <location>
        <begin position="102"/>
        <end position="108"/>
    </location>
</feature>
<feature type="turn" evidence="4">
    <location>
        <begin position="109"/>
        <end position="111"/>
    </location>
</feature>
<feature type="helix" evidence="4">
    <location>
        <begin position="112"/>
        <end position="118"/>
    </location>
</feature>
<feature type="helix" evidence="4">
    <location>
        <begin position="123"/>
        <end position="138"/>
    </location>
</feature>
<feature type="helix" evidence="4">
    <location>
        <begin position="143"/>
        <end position="161"/>
    </location>
</feature>
<keyword id="KW-0002">3D-structure</keyword>
<keyword id="KW-0042">Antenna complex</keyword>
<keyword id="KW-0089">Bile pigment</keyword>
<keyword id="KW-0157">Chromophore</keyword>
<keyword id="KW-0249">Electron transport</keyword>
<keyword id="KW-0472">Membrane</keyword>
<keyword id="KW-0488">Methylation</keyword>
<keyword id="KW-0602">Photosynthesis</keyword>
<keyword id="KW-0605">Phycobilisome</keyword>
<keyword id="KW-1185">Reference proteome</keyword>
<keyword id="KW-0793">Thylakoid</keyword>
<keyword id="KW-0813">Transport</keyword>
<dbReference type="EMBL" id="BA000022">
    <property type="protein sequence ID" value="BAA16886.1"/>
    <property type="molecule type" value="Genomic_DNA"/>
</dbReference>
<dbReference type="PIR" id="S74735">
    <property type="entry name" value="S74735"/>
</dbReference>
<dbReference type="PDB" id="4PO5">
    <property type="method" value="X-ray"/>
    <property type="resolution" value="1.75 A"/>
    <property type="chains" value="A/C/E=1-161"/>
</dbReference>
<dbReference type="PDB" id="7SC7">
    <property type="method" value="EM"/>
    <property type="resolution" value="2.80 A"/>
    <property type="chains" value="AE/BL=1-161"/>
</dbReference>
<dbReference type="PDB" id="7SC9">
    <property type="method" value="EM"/>
    <property type="resolution" value="2.60 A"/>
    <property type="chains" value="AE/BM=1-161"/>
</dbReference>
<dbReference type="PDB" id="7SCB">
    <property type="method" value="EM"/>
    <property type="resolution" value="2.50 A"/>
    <property type="chains" value="AE=1-161"/>
</dbReference>
<dbReference type="PDB" id="8TO2">
    <property type="method" value="EM"/>
    <property type="resolution" value="2.00 A"/>
    <property type="chains" value="d=1-161"/>
</dbReference>
<dbReference type="PDBsum" id="4PO5"/>
<dbReference type="PDBsum" id="7SC7"/>
<dbReference type="PDBsum" id="7SC9"/>
<dbReference type="PDBsum" id="7SCB"/>
<dbReference type="PDBsum" id="8TO2"/>
<dbReference type="EMDB" id="EMD-25028"/>
<dbReference type="EMDB" id="EMD-25030"/>
<dbReference type="EMDB" id="EMD-25032"/>
<dbReference type="EMDB" id="EMD-41434"/>
<dbReference type="SMR" id="P72870"/>
<dbReference type="STRING" id="1148.gene:10497745"/>
<dbReference type="PaxDb" id="1148-1651960"/>
<dbReference type="EnsemblBacteria" id="BAA16886">
    <property type="protein sequence ID" value="BAA16886"/>
    <property type="gene ID" value="BAA16886"/>
</dbReference>
<dbReference type="KEGG" id="syn:sll0928"/>
<dbReference type="eggNOG" id="ENOG502Z81S">
    <property type="taxonomic scope" value="Bacteria"/>
</dbReference>
<dbReference type="InParanoid" id="P72870"/>
<dbReference type="PhylomeDB" id="P72870"/>
<dbReference type="EvolutionaryTrace" id="P72870"/>
<dbReference type="Proteomes" id="UP000001425">
    <property type="component" value="Chromosome"/>
</dbReference>
<dbReference type="GO" id="GO:0030089">
    <property type="term" value="C:phycobilisome"/>
    <property type="evidence" value="ECO:0000318"/>
    <property type="project" value="GO_Central"/>
</dbReference>
<dbReference type="GO" id="GO:0031676">
    <property type="term" value="C:plasma membrane-derived thylakoid membrane"/>
    <property type="evidence" value="ECO:0007669"/>
    <property type="project" value="UniProtKB-SubCell"/>
</dbReference>
<dbReference type="GO" id="GO:0015979">
    <property type="term" value="P:photosynthesis"/>
    <property type="evidence" value="ECO:0007669"/>
    <property type="project" value="UniProtKB-KW"/>
</dbReference>
<dbReference type="CDD" id="cd12125">
    <property type="entry name" value="APC_alpha"/>
    <property type="match status" value="1"/>
</dbReference>
<dbReference type="Gene3D" id="1.10.490.20">
    <property type="entry name" value="Phycocyanins"/>
    <property type="match status" value="1"/>
</dbReference>
<dbReference type="InterPro" id="IPR009050">
    <property type="entry name" value="Globin-like_sf"/>
</dbReference>
<dbReference type="InterPro" id="IPR012128">
    <property type="entry name" value="Phycobilisome_asu/bsu"/>
</dbReference>
<dbReference type="InterPro" id="IPR038719">
    <property type="entry name" value="Phycobilisome_asu/bsu_sf"/>
</dbReference>
<dbReference type="PANTHER" id="PTHR34011:SF2">
    <property type="entry name" value="ALLOPHYCOCYANIN ALPHA CHAIN"/>
    <property type="match status" value="1"/>
</dbReference>
<dbReference type="PANTHER" id="PTHR34011">
    <property type="entry name" value="PHYCOBILISOME 32.1 KDA LINKER POLYPEPTIDE, PHYCOCYANIN-ASSOCIATED, ROD 2-RELATED"/>
    <property type="match status" value="1"/>
</dbReference>
<dbReference type="Pfam" id="PF00502">
    <property type="entry name" value="Phycobilisome"/>
    <property type="match status" value="1"/>
</dbReference>
<dbReference type="PIRSF" id="PIRSF000081">
    <property type="entry name" value="Phycocyanin"/>
    <property type="match status" value="1"/>
</dbReference>
<dbReference type="SUPFAM" id="SSF46458">
    <property type="entry name" value="Globin-like"/>
    <property type="match status" value="1"/>
</dbReference>
<gene>
    <name type="primary">apcD</name>
    <name type="ordered locus">sll0928</name>
</gene>
<comment type="function">
    <text evidence="1 2">Light-harvesting photosynthetic bile pigment-protein from the phycobiliprotein complex. Allophycocyanin has a maximum absorption at approximately 654 nanometers (By similarity).</text>
</comment>
<comment type="subunit">
    <text evidence="1">Heterohexamer of two alpha chains, one alpha-B chain and three beta chains.</text>
</comment>
<comment type="subcellular location">
    <subcellularLocation>
        <location>Cellular thylakoid membrane</location>
        <topology>Peripheral membrane protein</topology>
        <orientation>Cytoplasmic side</orientation>
    </subcellularLocation>
    <text evidence="1">Forms the core of the phycobilisome.</text>
</comment>
<comment type="PTM">
    <text evidence="1">Contains one covalently linked bilin chromophore.</text>
</comment>
<comment type="disruption phenotype">
    <text evidence="2">Increased levels of phycobilisomes (PBS) and photosystem I (PSI), decreased levels of photosystem II (PSII) per cell. Cells are unable to undergo state transitions. When combined with an ApcF deletion mutant the cells have decreased PBS, PSI and PSII, and require glucose to grow.</text>
</comment>
<comment type="similarity">
    <text evidence="3">Belongs to the phycobiliprotein family.</text>
</comment>
<organism>
    <name type="scientific">Synechocystis sp. (strain ATCC 27184 / PCC 6803 / Kazusa)</name>
    <dbReference type="NCBI Taxonomy" id="1111708"/>
    <lineage>
        <taxon>Bacteria</taxon>
        <taxon>Bacillati</taxon>
        <taxon>Cyanobacteriota</taxon>
        <taxon>Cyanophyceae</taxon>
        <taxon>Synechococcales</taxon>
        <taxon>Merismopediaceae</taxon>
        <taxon>Synechocystis</taxon>
    </lineage>
</organism>
<reference key="1">
    <citation type="journal article" date="1996" name="DNA Res.">
        <title>Sequence analysis of the genome of the unicellular cyanobacterium Synechocystis sp. strain PCC6803. II. Sequence determination of the entire genome and assignment of potential protein-coding regions.</title>
        <authorList>
            <person name="Kaneko T."/>
            <person name="Sato S."/>
            <person name="Kotani H."/>
            <person name="Tanaka A."/>
            <person name="Asamizu E."/>
            <person name="Nakamura Y."/>
            <person name="Miyajima N."/>
            <person name="Hirosawa M."/>
            <person name="Sugiura M."/>
            <person name="Sasamoto S."/>
            <person name="Kimura T."/>
            <person name="Hosouchi T."/>
            <person name="Matsuno A."/>
            <person name="Muraki A."/>
            <person name="Nakazaki N."/>
            <person name="Naruo K."/>
            <person name="Okumura S."/>
            <person name="Shimpo S."/>
            <person name="Takeuchi C."/>
            <person name="Wada T."/>
            <person name="Watanabe A."/>
            <person name="Yamada M."/>
            <person name="Yasuda M."/>
            <person name="Tabata S."/>
        </authorList>
    </citation>
    <scope>NUCLEOTIDE SEQUENCE [LARGE SCALE GENOMIC DNA]</scope>
    <source>
        <strain>ATCC 27184 / PCC 6803 / Kazusa</strain>
    </source>
</reference>
<reference key="2">
    <citation type="journal article" date="1999" name="Photosyn. Res.">
        <title>The role of ApcD and ApcF in energy transfer from phycobilisomes to PS I and PS II in a cyanobacterium.</title>
        <authorList>
            <person name="Ashby M.K."/>
            <person name="Mullineaux C.W."/>
        </authorList>
    </citation>
    <scope>FUNCTION</scope>
    <scope>DISRUPTION PHENOTYPE</scope>
    <source>
        <strain>ATCC 27184 / PCC 6803 / N-1</strain>
    </source>
</reference>
<proteinExistence type="evidence at protein level"/>
<sequence>MSVVSQVILQADDQLRYPTSGELKGIQAFLTTGAQRIRIAETLAENEKKIVDQAQKQLFKKHPEYRAPGGNAYGQRQYNQCLRDYGWYLRLVTYGVLAGNKEPIETTGLIGVKEMYNSLNVPVPGMVDAVTVLKDAALGLLSAEDANETAPYFDYIIQFMS</sequence>
<name>APCD_SYNY3</name>